<organism>
    <name type="scientific">Shewanella amazonensis (strain ATCC BAA-1098 / SB2B)</name>
    <dbReference type="NCBI Taxonomy" id="326297"/>
    <lineage>
        <taxon>Bacteria</taxon>
        <taxon>Pseudomonadati</taxon>
        <taxon>Pseudomonadota</taxon>
        <taxon>Gammaproteobacteria</taxon>
        <taxon>Alteromonadales</taxon>
        <taxon>Shewanellaceae</taxon>
        <taxon>Shewanella</taxon>
    </lineage>
</organism>
<name>ANMK_SHEAM</name>
<proteinExistence type="inferred from homology"/>
<evidence type="ECO:0000255" key="1">
    <source>
        <dbReference type="HAMAP-Rule" id="MF_01270"/>
    </source>
</evidence>
<sequence>MSQSLFIGLMSGTSMDGVDAVLVDFDTPSPKLIATHTEAIPEHLFKGLQRLCQPGQDEVNRLGRLDRSVGSLFAKAVNNLLASSGIDKSQVVAIGSHGQTVRHMPNLEVGFTVQIGDPNTIAAETGIDVIADFRRKDIALGGQGAPLVPAFHQQIFAKADKRRVILNIGGIANITWLPGNAEAVLGFDTGPGNTLIDGWIQQVKQQAFDRDGAFAASGKTDNTLLAQLLSHPYFMQPYPKSTGRELFNNAWLEQQLEKFGHLDEADIQSTLLDLTCHSIAADILKLSNSGELFVCGGGALNIELMNRLQALLPGFTLTTTSVLGVDPKWVEAIAFAWLALRHHQGLPANLPAVTGARREAILGARFPAA</sequence>
<accession>A1S3U9</accession>
<feature type="chain" id="PRO_1000067358" description="Anhydro-N-acetylmuramic acid kinase">
    <location>
        <begin position="1"/>
        <end position="369"/>
    </location>
</feature>
<feature type="binding site" evidence="1">
    <location>
        <begin position="12"/>
        <end position="19"/>
    </location>
    <ligand>
        <name>ATP</name>
        <dbReference type="ChEBI" id="CHEBI:30616"/>
    </ligand>
</feature>
<protein>
    <recommendedName>
        <fullName evidence="1">Anhydro-N-acetylmuramic acid kinase</fullName>
        <ecNumber evidence="1">2.7.1.170</ecNumber>
    </recommendedName>
    <alternativeName>
        <fullName evidence="1">AnhMurNAc kinase</fullName>
    </alternativeName>
</protein>
<reference key="1">
    <citation type="submission" date="2006-12" db="EMBL/GenBank/DDBJ databases">
        <title>Complete sequence of Shewanella amazonensis SB2B.</title>
        <authorList>
            <consortium name="US DOE Joint Genome Institute"/>
            <person name="Copeland A."/>
            <person name="Lucas S."/>
            <person name="Lapidus A."/>
            <person name="Barry K."/>
            <person name="Detter J.C."/>
            <person name="Glavina del Rio T."/>
            <person name="Hammon N."/>
            <person name="Israni S."/>
            <person name="Dalin E."/>
            <person name="Tice H."/>
            <person name="Pitluck S."/>
            <person name="Munk A.C."/>
            <person name="Brettin T."/>
            <person name="Bruce D."/>
            <person name="Han C."/>
            <person name="Tapia R."/>
            <person name="Gilna P."/>
            <person name="Schmutz J."/>
            <person name="Larimer F."/>
            <person name="Land M."/>
            <person name="Hauser L."/>
            <person name="Kyrpides N."/>
            <person name="Mikhailova N."/>
            <person name="Fredrickson J."/>
            <person name="Richardson P."/>
        </authorList>
    </citation>
    <scope>NUCLEOTIDE SEQUENCE [LARGE SCALE GENOMIC DNA]</scope>
    <source>
        <strain>ATCC BAA-1098 / SB2B</strain>
    </source>
</reference>
<comment type="function">
    <text evidence="1">Catalyzes the specific phosphorylation of 1,6-anhydro-N-acetylmuramic acid (anhMurNAc) with the simultaneous cleavage of the 1,6-anhydro ring, generating MurNAc-6-P. Is required for the utilization of anhMurNAc either imported from the medium or derived from its own cell wall murein, and thus plays a role in cell wall recycling.</text>
</comment>
<comment type="catalytic activity">
    <reaction evidence="1">
        <text>1,6-anhydro-N-acetyl-beta-muramate + ATP + H2O = N-acetyl-D-muramate 6-phosphate + ADP + H(+)</text>
        <dbReference type="Rhea" id="RHEA:24952"/>
        <dbReference type="ChEBI" id="CHEBI:15377"/>
        <dbReference type="ChEBI" id="CHEBI:15378"/>
        <dbReference type="ChEBI" id="CHEBI:30616"/>
        <dbReference type="ChEBI" id="CHEBI:58690"/>
        <dbReference type="ChEBI" id="CHEBI:58722"/>
        <dbReference type="ChEBI" id="CHEBI:456216"/>
        <dbReference type="EC" id="2.7.1.170"/>
    </reaction>
</comment>
<comment type="pathway">
    <text evidence="1">Amino-sugar metabolism; 1,6-anhydro-N-acetylmuramate degradation.</text>
</comment>
<comment type="pathway">
    <text evidence="1">Cell wall biogenesis; peptidoglycan recycling.</text>
</comment>
<comment type="similarity">
    <text evidence="1">Belongs to the anhydro-N-acetylmuramic acid kinase family.</text>
</comment>
<dbReference type="EC" id="2.7.1.170" evidence="1"/>
<dbReference type="EMBL" id="CP000507">
    <property type="protein sequence ID" value="ABL99055.1"/>
    <property type="molecule type" value="Genomic_DNA"/>
</dbReference>
<dbReference type="RefSeq" id="WP_011758965.1">
    <property type="nucleotide sequence ID" value="NC_008700.1"/>
</dbReference>
<dbReference type="SMR" id="A1S3U9"/>
<dbReference type="STRING" id="326297.Sama_0848"/>
<dbReference type="KEGG" id="saz:Sama_0848"/>
<dbReference type="eggNOG" id="COG2377">
    <property type="taxonomic scope" value="Bacteria"/>
</dbReference>
<dbReference type="HOGENOM" id="CLU_038782_0_0_6"/>
<dbReference type="OrthoDB" id="9763949at2"/>
<dbReference type="UniPathway" id="UPA00343"/>
<dbReference type="UniPathway" id="UPA00544"/>
<dbReference type="Proteomes" id="UP000009175">
    <property type="component" value="Chromosome"/>
</dbReference>
<dbReference type="GO" id="GO:0005524">
    <property type="term" value="F:ATP binding"/>
    <property type="evidence" value="ECO:0007669"/>
    <property type="project" value="UniProtKB-UniRule"/>
</dbReference>
<dbReference type="GO" id="GO:0016301">
    <property type="term" value="F:kinase activity"/>
    <property type="evidence" value="ECO:0007669"/>
    <property type="project" value="UniProtKB-KW"/>
</dbReference>
<dbReference type="GO" id="GO:0016773">
    <property type="term" value="F:phosphotransferase activity, alcohol group as acceptor"/>
    <property type="evidence" value="ECO:0007669"/>
    <property type="project" value="UniProtKB-UniRule"/>
</dbReference>
<dbReference type="GO" id="GO:0097175">
    <property type="term" value="P:1,6-anhydro-N-acetyl-beta-muramic acid catabolic process"/>
    <property type="evidence" value="ECO:0007669"/>
    <property type="project" value="UniProtKB-UniRule"/>
</dbReference>
<dbReference type="GO" id="GO:0006040">
    <property type="term" value="P:amino sugar metabolic process"/>
    <property type="evidence" value="ECO:0007669"/>
    <property type="project" value="InterPro"/>
</dbReference>
<dbReference type="GO" id="GO:0009254">
    <property type="term" value="P:peptidoglycan turnover"/>
    <property type="evidence" value="ECO:0007669"/>
    <property type="project" value="UniProtKB-UniRule"/>
</dbReference>
<dbReference type="CDD" id="cd24050">
    <property type="entry name" value="ASKHA_NBD_ANMK"/>
    <property type="match status" value="1"/>
</dbReference>
<dbReference type="Gene3D" id="3.30.420.40">
    <property type="match status" value="2"/>
</dbReference>
<dbReference type="HAMAP" id="MF_01270">
    <property type="entry name" value="AnhMurNAc_kinase"/>
    <property type="match status" value="1"/>
</dbReference>
<dbReference type="InterPro" id="IPR005338">
    <property type="entry name" value="Anhydro_N_Ac-Mur_kinase"/>
</dbReference>
<dbReference type="InterPro" id="IPR043129">
    <property type="entry name" value="ATPase_NBD"/>
</dbReference>
<dbReference type="NCBIfam" id="NF007139">
    <property type="entry name" value="PRK09585.1-3"/>
    <property type="match status" value="1"/>
</dbReference>
<dbReference type="NCBIfam" id="NF007148">
    <property type="entry name" value="PRK09585.3-2"/>
    <property type="match status" value="1"/>
</dbReference>
<dbReference type="PANTHER" id="PTHR30605">
    <property type="entry name" value="ANHYDRO-N-ACETYLMURAMIC ACID KINASE"/>
    <property type="match status" value="1"/>
</dbReference>
<dbReference type="PANTHER" id="PTHR30605:SF0">
    <property type="entry name" value="ANHYDRO-N-ACETYLMURAMIC ACID KINASE"/>
    <property type="match status" value="1"/>
</dbReference>
<dbReference type="Pfam" id="PF03702">
    <property type="entry name" value="AnmK"/>
    <property type="match status" value="1"/>
</dbReference>
<dbReference type="SUPFAM" id="SSF53067">
    <property type="entry name" value="Actin-like ATPase domain"/>
    <property type="match status" value="1"/>
</dbReference>
<keyword id="KW-0067">ATP-binding</keyword>
<keyword id="KW-0119">Carbohydrate metabolism</keyword>
<keyword id="KW-0418">Kinase</keyword>
<keyword id="KW-0547">Nucleotide-binding</keyword>
<keyword id="KW-1185">Reference proteome</keyword>
<keyword id="KW-0808">Transferase</keyword>
<gene>
    <name evidence="1" type="primary">anmK</name>
    <name type="ordered locus">Sama_0848</name>
</gene>